<reference key="1">
    <citation type="journal article" date="1998" name="Neuron">
        <title>Tomosyn: a syntaxin-1-binding protein that forms a novel complex in the neurotransmitter release process.</title>
        <authorList>
            <person name="Fujita Y."/>
            <person name="Shirataki H."/>
            <person name="Sakisaka T."/>
            <person name="Asakura T."/>
            <person name="Ohya T."/>
            <person name="Kotani H."/>
            <person name="Yokoyama S."/>
            <person name="Nishioka H."/>
            <person name="Matsuura Y."/>
            <person name="Mizoguchi A."/>
            <person name="Scheller R.H."/>
            <person name="Takai Y."/>
        </authorList>
    </citation>
    <scope>NUCLEOTIDE SEQUENCE [MRNA] (ISOFORM 2)</scope>
    <scope>PARTIAL PROTEIN SEQUENCE</scope>
    <scope>FUNCTION</scope>
    <scope>INTERACTION WITH STX1A AND STX1B</scope>
    <scope>IDENTIFICATION IN A COMPLEX WITH STX1A; SNAP25 AND SYT1</scope>
    <scope>SUBCELLULAR LOCATION</scope>
    <scope>TISSUE SPECIFICITY</scope>
    <source>
        <tissue>Brain</tissue>
    </source>
</reference>
<reference key="2">
    <citation type="journal article" date="1999" name="Biochem. Biophys. Res. Commun.">
        <title>Three splicing variants of tomosyn and identification of their syntaxin-binding region.</title>
        <authorList>
            <person name="Yokoyama S."/>
            <person name="Shirataki H."/>
            <person name="Sakisaka T."/>
            <person name="Takai Y."/>
        </authorList>
    </citation>
    <scope>NUCLEOTIDE SEQUENCE [MRNA] (ISOFORMS 1; 2 AND 3)</scope>
    <scope>INTERACTION WITH STX1A</scope>
    <scope>TISSUE SPECIFICITY</scope>
    <source>
        <tissue>Kidney</tissue>
    </source>
</reference>
<reference key="3">
    <citation type="journal article" date="2005" name="J. Cell Biol.">
        <title>PKA-catalyzed phosphorylation of tomosyn and its implication in Ca2+-dependent exocytosis of neurotransmitter.</title>
        <authorList>
            <person name="Baba T."/>
            <person name="Sakisaka T."/>
            <person name="Mochida S."/>
            <person name="Takai Y."/>
        </authorList>
    </citation>
    <scope>MUTAGENESIS OF SER-724</scope>
    <scope>PHOSPHORYLATION AT SER-724</scope>
</reference>
<reference key="4">
    <citation type="journal article" date="2012" name="Nat. Commun.">
        <title>Quantitative maps of protein phosphorylation sites across 14 different rat organs and tissues.</title>
        <authorList>
            <person name="Lundby A."/>
            <person name="Secher A."/>
            <person name="Lage K."/>
            <person name="Nordsborg N.B."/>
            <person name="Dmytriyev A."/>
            <person name="Lundby C."/>
            <person name="Olsen J.V."/>
        </authorList>
    </citation>
    <scope>PHOSPHORYLATION [LARGE SCALE ANALYSIS] AT SER-760 AND SER-783</scope>
    <scope>IDENTIFICATION BY MASS SPECTROMETRY [LARGE SCALE ANALYSIS]</scope>
</reference>
<reference key="5">
    <citation type="journal article" date="2004" name="J. Biol. Chem.">
        <title>Structural basis for the inhibitory role of tomosyn in exocytosis.</title>
        <authorList>
            <person name="Pobbati A.V."/>
            <person name="Razeto A."/>
            <person name="Boeddener M."/>
            <person name="Becker S."/>
            <person name="Fasshauer D."/>
        </authorList>
    </citation>
    <scope>X-RAY CRYSTALLOGRAPHY (2.0 ANGSTROMS) OF 1010-1145 IN COMPLEX WITH STX1A AND SNAP25</scope>
</reference>
<sequence length="1152" mass="127659">MRKFNIRKVLDGLTAGSSSASQQQQQQQHPPGNREPEIQETLQSEHFQLCKTVRHGFPYQPSALAFDPVQKILAVGTQTGALRLFGRPGVECYCQHDSGAAVIQLQFLINEGALVSALADDTLHLWNLRQKRPAVLHSLKFCRERVTFCHLPFQSKWLYVGTERGNIHIVNVESFTLSGYVIMWNKAIELSSKSHPGPVVHISDNPMDEGKLLIGFESGTVVLWDLKSKKADYRYTYDEAIHSVAWHHEGKQFICSHSDGTLTIWNVRSPTKPVQTITPHGKQLKDGKKPEPCKPILKVEFKTTRSGEPFIILSGGLSYDTVGRRPCLTVMHGKSTAVLEMDYSIVDFLTLCETPYPNDFQEPYAVVVLLEKDLVLIDLAQNGYPIFENPYPLSIHESPVTCCEYFADCPVDLIPALYSVGARQKRQGYSKKEWPINGGNWGLGAQSYPEIIITGHADGSIKFWDASAITLQVLYKLKTSKVFEKSRNKDDRQNTDIVDEDPYAIQIISWCPESRMLCIAGVSAHVIIYRFSKQEVVTEVIPMLEVRLLYEINDVETPEGEQPPPLSTPVGSSTSQPIPPQSHPSTSSSSSDGLRDNVPCLKVKNSPLKQSPGYQTELVIQLVWVGGEPPQQITSLALNSSYGLVVFGNSNGIAMVDYLQKAVLLNLSTIELYGSNDPYRREPRSPRKSRQPSGAGLCDITEGTVVPEDRCKSPTSGSSSPHNSDDEQKVNNFIEKVKTQSRKFSKMVASDLAKMSRKLSLPTDLKPDLDVKDNSFSRSRSSSVTSIDKESREAISALHFCETFTRKADSSPSPCLWVGTTVGTAFVITLNLPLGPEQRLLQPVIVSPSGTILRLKGAILRMAFLDAAGCLMPPAYEPWTEHNVPEEKDEKEKLKKRRPVSVSPSSSQEISENQYAVICSEKQAKVISLPTQNCAYKQNITETSFVLRGDIVALSNSVCLACFCANGHIMTFSLPSLRPLLDVYYLPLTNMRIARTFCFANSGQALYLVSPTEIQRLTYSQETCENLQEMLGELFTPVETPEAPNRGFFKGLFGGGAQSLDREELFGESSSGKASRSLAQHIPGPGGIEGVKGAASGVVGELARARLALDERGQKLSDLEERTAAMMSSADSFSKHAHEMMLKYKDKKWYQF</sequence>
<organism>
    <name type="scientific">Rattus norvegicus</name>
    <name type="common">Rat</name>
    <dbReference type="NCBI Taxonomy" id="10116"/>
    <lineage>
        <taxon>Eukaryota</taxon>
        <taxon>Metazoa</taxon>
        <taxon>Chordata</taxon>
        <taxon>Craniata</taxon>
        <taxon>Vertebrata</taxon>
        <taxon>Euteleostomi</taxon>
        <taxon>Mammalia</taxon>
        <taxon>Eutheria</taxon>
        <taxon>Euarchontoglires</taxon>
        <taxon>Glires</taxon>
        <taxon>Rodentia</taxon>
        <taxon>Myomorpha</taxon>
        <taxon>Muroidea</taxon>
        <taxon>Muridae</taxon>
        <taxon>Murinae</taxon>
        <taxon>Rattus</taxon>
    </lineage>
</organism>
<dbReference type="EMBL" id="U92072">
    <property type="protein sequence ID" value="AAD04756.1"/>
    <property type="molecule type" value="mRNA"/>
</dbReference>
<dbReference type="EMBL" id="AF118889">
    <property type="protein sequence ID" value="AAD27818.1"/>
    <property type="molecule type" value="mRNA"/>
</dbReference>
<dbReference type="EMBL" id="AF118890">
    <property type="protein sequence ID" value="AAD27819.1"/>
    <property type="molecule type" value="mRNA"/>
</dbReference>
<dbReference type="PIR" id="T42213">
    <property type="entry name" value="T42213"/>
</dbReference>
<dbReference type="RefSeq" id="NP_110470.1">
    <molecule id="Q9WU70-2"/>
    <property type="nucleotide sequence ID" value="NM_030843.3"/>
</dbReference>
<dbReference type="RefSeq" id="NP_848035.1">
    <molecule id="Q9WU70-1"/>
    <property type="nucleotide sequence ID" value="NM_178345.2"/>
</dbReference>
<dbReference type="RefSeq" id="NP_848036.1">
    <molecule id="Q9WU70-3"/>
    <property type="nucleotide sequence ID" value="NM_178346.2"/>
</dbReference>
<dbReference type="PDB" id="1URQ">
    <property type="method" value="X-ray"/>
    <property type="resolution" value="2.00 A"/>
    <property type="chains" value="A=1086-1145"/>
</dbReference>
<dbReference type="PDBsum" id="1URQ"/>
<dbReference type="SMR" id="Q9WU70"/>
<dbReference type="BioGRID" id="249498">
    <property type="interactions" value="2"/>
</dbReference>
<dbReference type="CORUM" id="Q9WU70"/>
<dbReference type="FunCoup" id="Q9WU70">
    <property type="interactions" value="4155"/>
</dbReference>
<dbReference type="IntAct" id="Q9WU70">
    <property type="interactions" value="1"/>
</dbReference>
<dbReference type="STRING" id="10116.ENSRNOP00000049322"/>
<dbReference type="iPTMnet" id="Q9WU70"/>
<dbReference type="PhosphoSitePlus" id="Q9WU70"/>
<dbReference type="SwissPalm" id="Q9WU70"/>
<dbReference type="PaxDb" id="10116-ENSRNOP00000049322"/>
<dbReference type="Ensembl" id="ENSRNOT00000049699.7">
    <molecule id="Q9WU70-1"/>
    <property type="protein sequence ID" value="ENSRNOP00000049322.4"/>
    <property type="gene ID" value="ENSRNOG00000013351.9"/>
</dbReference>
<dbReference type="GeneID" id="81022"/>
<dbReference type="KEGG" id="rno:81022"/>
<dbReference type="UCSC" id="RGD:708517">
    <molecule id="Q9WU70-1"/>
    <property type="organism name" value="rat"/>
</dbReference>
<dbReference type="AGR" id="RGD:708517"/>
<dbReference type="CTD" id="134957"/>
<dbReference type="RGD" id="708517">
    <property type="gene designation" value="Stxbp5"/>
</dbReference>
<dbReference type="eggNOG" id="KOG1983">
    <property type="taxonomic scope" value="Eukaryota"/>
</dbReference>
<dbReference type="GeneTree" id="ENSGT00950000182906"/>
<dbReference type="HOGENOM" id="CLU_002808_0_0_1"/>
<dbReference type="InParanoid" id="Q9WU70"/>
<dbReference type="OrthoDB" id="19944at2759"/>
<dbReference type="PhylomeDB" id="Q9WU70"/>
<dbReference type="EvolutionaryTrace" id="Q9WU70"/>
<dbReference type="PRO" id="PR:Q9WU70"/>
<dbReference type="Proteomes" id="UP000002494">
    <property type="component" value="Chromosome 1"/>
</dbReference>
<dbReference type="Bgee" id="ENSRNOG00000013351">
    <property type="expression patterns" value="Expressed in frontal cortex and 19 other cell types or tissues"/>
</dbReference>
<dbReference type="GO" id="GO:0005892">
    <property type="term" value="C:acetylcholine-gated channel complex"/>
    <property type="evidence" value="ECO:0000266"/>
    <property type="project" value="RGD"/>
</dbReference>
<dbReference type="GO" id="GO:0005737">
    <property type="term" value="C:cytoplasm"/>
    <property type="evidence" value="ECO:0000318"/>
    <property type="project" value="GO_Central"/>
</dbReference>
<dbReference type="GO" id="GO:0098674">
    <property type="term" value="C:extrinsic component of neuronal dense core vesicle membrane"/>
    <property type="evidence" value="ECO:0000266"/>
    <property type="project" value="RGD"/>
</dbReference>
<dbReference type="GO" id="GO:0098888">
    <property type="term" value="C:extrinsic component of presynaptic membrane"/>
    <property type="evidence" value="ECO:0000314"/>
    <property type="project" value="SynGO"/>
</dbReference>
<dbReference type="GO" id="GO:0098686">
    <property type="term" value="C:hippocampal mossy fiber to CA3 synapse"/>
    <property type="evidence" value="ECO:0000266"/>
    <property type="project" value="RGD"/>
</dbReference>
<dbReference type="GO" id="GO:0031594">
    <property type="term" value="C:neuromuscular junction"/>
    <property type="evidence" value="ECO:0000314"/>
    <property type="project" value="SynGO"/>
</dbReference>
<dbReference type="GO" id="GO:0005886">
    <property type="term" value="C:plasma membrane"/>
    <property type="evidence" value="ECO:0000318"/>
    <property type="project" value="GO_Central"/>
</dbReference>
<dbReference type="GO" id="GO:0098793">
    <property type="term" value="C:presynapse"/>
    <property type="evidence" value="ECO:0000314"/>
    <property type="project" value="SynGO"/>
</dbReference>
<dbReference type="GO" id="GO:0099523">
    <property type="term" value="C:presynaptic cytosol"/>
    <property type="evidence" value="ECO:0000314"/>
    <property type="project" value="SynGO"/>
</dbReference>
<dbReference type="GO" id="GO:0098685">
    <property type="term" value="C:Schaffer collateral - CA1 synapse"/>
    <property type="evidence" value="ECO:0000314"/>
    <property type="project" value="SynGO"/>
</dbReference>
<dbReference type="GO" id="GO:0030141">
    <property type="term" value="C:secretory granule"/>
    <property type="evidence" value="ECO:0000304"/>
    <property type="project" value="BHF-UCL"/>
</dbReference>
<dbReference type="GO" id="GO:0031201">
    <property type="term" value="C:SNARE complex"/>
    <property type="evidence" value="ECO:0000318"/>
    <property type="project" value="GO_Central"/>
</dbReference>
<dbReference type="GO" id="GO:0008021">
    <property type="term" value="C:synaptic vesicle"/>
    <property type="evidence" value="ECO:0000314"/>
    <property type="project" value="SynGO"/>
</dbReference>
<dbReference type="GO" id="GO:0005096">
    <property type="term" value="F:GTPase activator activity"/>
    <property type="evidence" value="ECO:0000318"/>
    <property type="project" value="GO_Central"/>
</dbReference>
<dbReference type="GO" id="GO:0045159">
    <property type="term" value="F:myosin II binding"/>
    <property type="evidence" value="ECO:0000318"/>
    <property type="project" value="GO_Central"/>
</dbReference>
<dbReference type="GO" id="GO:0019905">
    <property type="term" value="F:syntaxin binding"/>
    <property type="evidence" value="ECO:0000266"/>
    <property type="project" value="RGD"/>
</dbReference>
<dbReference type="GO" id="GO:0017075">
    <property type="term" value="F:syntaxin-1 binding"/>
    <property type="evidence" value="ECO:0000314"/>
    <property type="project" value="RGD"/>
</dbReference>
<dbReference type="GO" id="GO:0006887">
    <property type="term" value="P:exocytosis"/>
    <property type="evidence" value="ECO:0000266"/>
    <property type="project" value="RGD"/>
</dbReference>
<dbReference type="GO" id="GO:0006893">
    <property type="term" value="P:Golgi to plasma membrane transport"/>
    <property type="evidence" value="ECO:0000318"/>
    <property type="project" value="GO_Central"/>
</dbReference>
<dbReference type="GO" id="GO:0045921">
    <property type="term" value="P:positive regulation of exocytosis"/>
    <property type="evidence" value="ECO:0000266"/>
    <property type="project" value="RGD"/>
</dbReference>
<dbReference type="GO" id="GO:0015031">
    <property type="term" value="P:protein transport"/>
    <property type="evidence" value="ECO:0007669"/>
    <property type="project" value="UniProtKB-KW"/>
</dbReference>
<dbReference type="GO" id="GO:0017157">
    <property type="term" value="P:regulation of exocytosis"/>
    <property type="evidence" value="ECO:0000266"/>
    <property type="project" value="RGD"/>
</dbReference>
<dbReference type="GO" id="GO:2000300">
    <property type="term" value="P:regulation of synaptic vesicle exocytosis"/>
    <property type="evidence" value="ECO:0000266"/>
    <property type="project" value="RGD"/>
</dbReference>
<dbReference type="GO" id="GO:0010807">
    <property type="term" value="P:regulation of synaptic vesicle priming"/>
    <property type="evidence" value="ECO:0000266"/>
    <property type="project" value="RGD"/>
</dbReference>
<dbReference type="GO" id="GO:0099504">
    <property type="term" value="P:synaptic vesicle cycle"/>
    <property type="evidence" value="ECO:0000314"/>
    <property type="project" value="SynGO"/>
</dbReference>
<dbReference type="CDD" id="cd15893">
    <property type="entry name" value="R-SNARE_STXBP5"/>
    <property type="match status" value="1"/>
</dbReference>
<dbReference type="FunFam" id="2.130.10.10:FF:003138">
    <property type="entry name" value="Syntaxin binding protein 5 like"/>
    <property type="match status" value="1"/>
</dbReference>
<dbReference type="FunFam" id="1.20.5.110:FF:000001">
    <property type="entry name" value="syntaxin-binding protein 5 isoform X1"/>
    <property type="match status" value="1"/>
</dbReference>
<dbReference type="FunFam" id="2.130.10.10:FF:000186">
    <property type="entry name" value="syntaxin-binding protein 5-like isoform X2"/>
    <property type="match status" value="1"/>
</dbReference>
<dbReference type="Gene3D" id="1.20.5.110">
    <property type="match status" value="1"/>
</dbReference>
<dbReference type="Gene3D" id="2.130.10.10">
    <property type="entry name" value="YVTN repeat-like/Quinoprotein amine dehydrogenase"/>
    <property type="match status" value="3"/>
</dbReference>
<dbReference type="InterPro" id="IPR000664">
    <property type="entry name" value="Lethal2_giant"/>
</dbReference>
<dbReference type="InterPro" id="IPR013905">
    <property type="entry name" value="Lgl_C_dom"/>
</dbReference>
<dbReference type="InterPro" id="IPR013577">
    <property type="entry name" value="LLGL2"/>
</dbReference>
<dbReference type="InterPro" id="IPR042855">
    <property type="entry name" value="V_SNARE_CC"/>
</dbReference>
<dbReference type="InterPro" id="IPR015943">
    <property type="entry name" value="WD40/YVTN_repeat-like_dom_sf"/>
</dbReference>
<dbReference type="InterPro" id="IPR036322">
    <property type="entry name" value="WD40_repeat_dom_sf"/>
</dbReference>
<dbReference type="InterPro" id="IPR001680">
    <property type="entry name" value="WD40_rpt"/>
</dbReference>
<dbReference type="PANTHER" id="PTHR10241">
    <property type="entry name" value="LETHAL 2 GIANT LARVAE PROTEIN"/>
    <property type="match status" value="1"/>
</dbReference>
<dbReference type="PANTHER" id="PTHR10241:SF22">
    <property type="entry name" value="SYNTAXIN-BINDING PROTEIN 5"/>
    <property type="match status" value="1"/>
</dbReference>
<dbReference type="Pfam" id="PF08596">
    <property type="entry name" value="Lgl_C"/>
    <property type="match status" value="1"/>
</dbReference>
<dbReference type="Pfam" id="PF08366">
    <property type="entry name" value="LLGL"/>
    <property type="match status" value="1"/>
</dbReference>
<dbReference type="Pfam" id="PF00400">
    <property type="entry name" value="WD40"/>
    <property type="match status" value="1"/>
</dbReference>
<dbReference type="PRINTS" id="PR00962">
    <property type="entry name" value="LETHAL2GIANT"/>
</dbReference>
<dbReference type="SMART" id="SM00320">
    <property type="entry name" value="WD40"/>
    <property type="match status" value="7"/>
</dbReference>
<dbReference type="SUPFAM" id="SSF58038">
    <property type="entry name" value="SNARE fusion complex"/>
    <property type="match status" value="1"/>
</dbReference>
<dbReference type="SUPFAM" id="SSF50978">
    <property type="entry name" value="WD40 repeat-like"/>
    <property type="match status" value="2"/>
</dbReference>
<dbReference type="PROSITE" id="PS50892">
    <property type="entry name" value="V_SNARE"/>
    <property type="match status" value="1"/>
</dbReference>
<dbReference type="PROSITE" id="PS00678">
    <property type="entry name" value="WD_REPEATS_1"/>
    <property type="match status" value="2"/>
</dbReference>
<dbReference type="PROSITE" id="PS50082">
    <property type="entry name" value="WD_REPEATS_2"/>
    <property type="match status" value="1"/>
</dbReference>
<dbReference type="PROSITE" id="PS50294">
    <property type="entry name" value="WD_REPEATS_REGION"/>
    <property type="match status" value="1"/>
</dbReference>
<name>STXB5_RAT</name>
<accession>Q9WU70</accession>
<accession>Q9WU71</accession>
<accession>Q9Z152</accession>
<gene>
    <name type="primary">Stxbp5</name>
    <name type="synonym">Llgl3</name>
</gene>
<keyword id="KW-0002">3D-structure</keyword>
<keyword id="KW-0025">Alternative splicing</keyword>
<keyword id="KW-1003">Cell membrane</keyword>
<keyword id="KW-0175">Coiled coil</keyword>
<keyword id="KW-0963">Cytoplasm</keyword>
<keyword id="KW-0968">Cytoplasmic vesicle</keyword>
<keyword id="KW-0903">Direct protein sequencing</keyword>
<keyword id="KW-0268">Exocytosis</keyword>
<keyword id="KW-0472">Membrane</keyword>
<keyword id="KW-0597">Phosphoprotein</keyword>
<keyword id="KW-0653">Protein transport</keyword>
<keyword id="KW-1185">Reference proteome</keyword>
<keyword id="KW-0677">Repeat</keyword>
<keyword id="KW-0770">Synapse</keyword>
<keyword id="KW-0813">Transport</keyword>
<keyword id="KW-0853">WD repeat</keyword>
<evidence type="ECO:0000250" key="1"/>
<evidence type="ECO:0000250" key="2">
    <source>
        <dbReference type="UniProtKB" id="Q5T5C0"/>
    </source>
</evidence>
<evidence type="ECO:0000250" key="3">
    <source>
        <dbReference type="UniProtKB" id="Q8K400"/>
    </source>
</evidence>
<evidence type="ECO:0000255" key="4">
    <source>
        <dbReference type="PROSITE-ProRule" id="PRU00290"/>
    </source>
</evidence>
<evidence type="ECO:0000256" key="5">
    <source>
        <dbReference type="SAM" id="MobiDB-lite"/>
    </source>
</evidence>
<evidence type="ECO:0000269" key="6">
    <source>
    </source>
</evidence>
<evidence type="ECO:0000269" key="7">
    <source>
    </source>
</evidence>
<evidence type="ECO:0000269" key="8">
    <source>
    </source>
</evidence>
<evidence type="ECO:0000269" key="9">
    <source>
    </source>
</evidence>
<evidence type="ECO:0000303" key="10">
    <source>
    </source>
</evidence>
<evidence type="ECO:0000303" key="11">
    <source>
    </source>
</evidence>
<evidence type="ECO:0000305" key="12"/>
<evidence type="ECO:0007744" key="13">
    <source>
    </source>
</evidence>
<evidence type="ECO:0007829" key="14">
    <source>
        <dbReference type="PDB" id="1URQ"/>
    </source>
</evidence>
<protein>
    <recommendedName>
        <fullName>Syntaxin-binding protein 5</fullName>
    </recommendedName>
    <alternativeName>
        <fullName>Lethal(2) giant larvae protein homolog 3</fullName>
    </alternativeName>
    <alternativeName>
        <fullName>Tomosyn-1</fullName>
    </alternativeName>
</protein>
<feature type="chain" id="PRO_0000051246" description="Syntaxin-binding protein 5">
    <location>
        <begin position="1"/>
        <end position="1152"/>
    </location>
</feature>
<feature type="repeat" description="WD 1">
    <location>
        <begin position="62"/>
        <end position="95"/>
    </location>
</feature>
<feature type="repeat" description="WD 2">
    <location>
        <begin position="102"/>
        <end position="141"/>
    </location>
</feature>
<feature type="repeat" description="WD 3">
    <location>
        <begin position="146"/>
        <end position="182"/>
    </location>
</feature>
<feature type="repeat" description="WD 4">
    <location>
        <begin position="201"/>
        <end position="235"/>
    </location>
</feature>
<feature type="repeat" description="WD 5">
    <location>
        <begin position="241"/>
        <end position="273"/>
    </location>
</feature>
<feature type="repeat" description="WD 6">
    <location>
        <begin position="295"/>
        <end position="337"/>
    </location>
</feature>
<feature type="repeat" description="WD 7">
    <location>
        <begin position="345"/>
        <end position="379"/>
    </location>
</feature>
<feature type="repeat" description="WD 8">
    <location>
        <begin position="401"/>
        <end position="478"/>
    </location>
</feature>
<feature type="repeat" description="WD 9">
    <location>
        <begin position="506"/>
        <end position="620"/>
    </location>
</feature>
<feature type="repeat" description="WD 10">
    <location>
        <begin position="634"/>
        <end position="696"/>
    </location>
</feature>
<feature type="repeat" description="WD 11">
    <location>
        <begin position="795"/>
        <end position="852"/>
    </location>
</feature>
<feature type="repeat" description="WD 12">
    <location>
        <begin position="861"/>
        <end position="935"/>
    </location>
</feature>
<feature type="repeat" description="WD 13">
    <location>
        <begin position="940"/>
        <end position="984"/>
    </location>
</feature>
<feature type="repeat" description="WD 14">
    <location>
        <begin position="998"/>
        <end position="1021"/>
    </location>
</feature>
<feature type="domain" description="v-SNARE coiled-coil homology" evidence="4">
    <location>
        <begin position="1087"/>
        <end position="1147"/>
    </location>
</feature>
<feature type="region of interest" description="Disordered" evidence="5">
    <location>
        <begin position="14"/>
        <end position="35"/>
    </location>
</feature>
<feature type="region of interest" description="Disordered" evidence="5">
    <location>
        <begin position="557"/>
        <end position="596"/>
    </location>
</feature>
<feature type="region of interest" description="Disordered" evidence="5">
    <location>
        <begin position="675"/>
        <end position="731"/>
    </location>
</feature>
<feature type="region of interest" description="Disordered" evidence="5">
    <location>
        <begin position="879"/>
        <end position="907"/>
    </location>
</feature>
<feature type="compositionally biased region" description="Low complexity" evidence="5">
    <location>
        <begin position="17"/>
        <end position="28"/>
    </location>
</feature>
<feature type="compositionally biased region" description="Low complexity" evidence="5">
    <location>
        <begin position="713"/>
        <end position="722"/>
    </location>
</feature>
<feature type="compositionally biased region" description="Basic and acidic residues" evidence="5">
    <location>
        <begin position="879"/>
        <end position="893"/>
    </location>
</feature>
<feature type="modified residue" description="Phosphoserine" evidence="2">
    <location>
        <position position="693"/>
    </location>
</feature>
<feature type="modified residue" description="Phosphoserine; by PKA" evidence="8">
    <location>
        <position position="724"/>
    </location>
</feature>
<feature type="modified residue" description="Phosphoserine" evidence="13">
    <location>
        <position position="760"/>
    </location>
</feature>
<feature type="modified residue" description="Phosphothreonine" evidence="2">
    <location>
        <position position="763"/>
    </location>
</feature>
<feature type="modified residue" description="Phosphoserine" evidence="13">
    <location>
        <position position="783"/>
    </location>
</feature>
<feature type="modified residue" description="Phosphothreonine" evidence="3">
    <location>
        <position position="785"/>
    </location>
</feature>
<feature type="modified residue" description="Phosphoserine" evidence="2">
    <location>
        <position position="786"/>
    </location>
</feature>
<feature type="modified residue" description="Phosphoserine" evidence="3">
    <location>
        <position position="901"/>
    </location>
</feature>
<feature type="modified residue" description="Phosphoserine" evidence="3">
    <location>
        <position position="903"/>
    </location>
</feature>
<feature type="modified residue" description="Phosphothreonine" evidence="2">
    <location>
        <position position="1040"/>
    </location>
</feature>
<feature type="modified residue" description="Phosphoserine" evidence="3">
    <location>
        <position position="1059"/>
    </location>
</feature>
<feature type="modified residue" description="Phosphoserine" evidence="2">
    <location>
        <position position="1132"/>
    </location>
</feature>
<feature type="splice variant" id="VSP_016476" description="In isoform 3." evidence="10">
    <location>
        <begin position="717"/>
        <end position="769"/>
    </location>
</feature>
<feature type="splice variant" id="VSP_016477" description="In isoform 2." evidence="10 11">
    <location>
        <begin position="717"/>
        <end position="752"/>
    </location>
</feature>
<feature type="mutagenesis site" description="Strongly reduces phosphorylation." evidence="8">
    <original>S</original>
    <variation>A</variation>
    <location>
        <position position="724"/>
    </location>
</feature>
<feature type="mutagenesis site" description="Reduces interaction with STX1A." evidence="8">
    <original>S</original>
    <variation>D</variation>
    <location>
        <position position="724"/>
    </location>
</feature>
<feature type="helix" evidence="14">
    <location>
        <begin position="1089"/>
        <end position="1143"/>
    </location>
</feature>
<comment type="function">
    <text evidence="1 9">Inhibits translocation of GLUT4 from intracellular vesicles to the plasma membrane (By similarity). Plays a regulatory role in calcium-dependent exocytosis and neurotransmitter release. Inhibits membrane fusion between transport vesicles and the plasma membrane. May modulate the assembly of trans-SNARE complexes between transport vesicles and the plasma membrane. Competes with STXBP1 for STX1 binding.</text>
</comment>
<comment type="subunit">
    <text evidence="1 6 7 9">Part of a complex that contains STXBP5, STX4A and SNAP23 (By similarity). Interacts with STX1A and STX4A via its v-SNARE homology domain. Part of a complex that contains STX1, STXBP5, SNAP25 and SYT1.</text>
</comment>
<comment type="subcellular location">
    <subcellularLocation>
        <location evidence="9">Cytoplasm</location>
    </subcellularLocation>
    <subcellularLocation>
        <location evidence="9">Cell membrane</location>
        <topology evidence="9">Peripheral membrane protein</topology>
    </subcellularLocation>
    <subcellularLocation>
        <location evidence="9">Cytoplasmic vesicle membrane</location>
        <topology evidence="9">Peripheral membrane protein</topology>
    </subcellularLocation>
    <subcellularLocation>
        <location evidence="9">Synapse</location>
    </subcellularLocation>
    <subcellularLocation>
        <location evidence="9">Cytoplasmic vesicle</location>
        <location evidence="9">Secretory vesicle</location>
        <location evidence="9">Synaptic vesicle</location>
    </subcellularLocation>
    <text>Cytoplasmic, and associated with vesicular membranes and the plasma membrane. Detected at synapses and on synaptic vesicles.</text>
</comment>
<comment type="alternative products">
    <event type="alternative splicing"/>
    <isoform>
        <id>Q9WU70-1</id>
        <name>1</name>
        <name>B-tomosyn</name>
        <sequence type="displayed"/>
    </isoform>
    <isoform>
        <id>Q9WU70-2</id>
        <name>2</name>
        <name>M-tomosyn</name>
        <sequence type="described" ref="VSP_016477"/>
    </isoform>
    <isoform>
        <id>Q9WU70-3</id>
        <name>3</name>
        <name>S-tomosyn</name>
        <sequence type="described" ref="VSP_016476"/>
    </isoform>
</comment>
<comment type="tissue specificity">
    <text evidence="6 9">Isoform 1 is detected in heart, brain, lung, liver, skeletal muscle, kidney and testis. Isoform 2 is detected in brain and in testis. Isoform 3 is detected in testis.</text>
</comment>
<comment type="PTM">
    <text evidence="8">Phosphorylation by PKA reduces interaction with STX1A and enhances synaptic neurotransmitter release.</text>
</comment>
<comment type="similarity">
    <text evidence="12">Belongs to the WD repeat L(2)GL family.</text>
</comment>
<proteinExistence type="evidence at protein level"/>